<dbReference type="EMBL" id="L06795">
    <property type="protein sequence ID" value="AAA56989.1"/>
    <property type="molecule type" value="Genomic_DNA"/>
</dbReference>
<dbReference type="EMBL" id="U10400">
    <property type="protein sequence ID" value="AAB68943.1"/>
    <property type="molecule type" value="Genomic_DNA"/>
</dbReference>
<dbReference type="EMBL" id="AY557835">
    <property type="protein sequence ID" value="AAS56161.1"/>
    <property type="molecule type" value="Genomic_DNA"/>
</dbReference>
<dbReference type="EMBL" id="BK006934">
    <property type="protein sequence ID" value="DAA06706.1"/>
    <property type="molecule type" value="Genomic_DNA"/>
</dbReference>
<dbReference type="PIR" id="S38191">
    <property type="entry name" value="S38191"/>
</dbReference>
<dbReference type="RefSeq" id="NP_011881.1">
    <property type="nucleotide sequence ID" value="NM_001179147.1"/>
</dbReference>
<dbReference type="SMR" id="P32792"/>
<dbReference type="BioGRID" id="36446">
    <property type="interactions" value="76"/>
</dbReference>
<dbReference type="FunCoup" id="P32792">
    <property type="interactions" value="23"/>
</dbReference>
<dbReference type="STRING" id="4932.YHR017W"/>
<dbReference type="iPTMnet" id="P32792"/>
<dbReference type="PaxDb" id="4932-YHR017W"/>
<dbReference type="PeptideAtlas" id="P32792"/>
<dbReference type="EnsemblFungi" id="YHR017W_mRNA">
    <property type="protein sequence ID" value="YHR017W"/>
    <property type="gene ID" value="YHR017W"/>
</dbReference>
<dbReference type="GeneID" id="856410"/>
<dbReference type="KEGG" id="sce:YHR017W"/>
<dbReference type="AGR" id="SGD:S000001059"/>
<dbReference type="SGD" id="S000001059">
    <property type="gene designation" value="YSC83"/>
</dbReference>
<dbReference type="VEuPathDB" id="FungiDB:YHR017W"/>
<dbReference type="eggNOG" id="ENOG502QUU7">
    <property type="taxonomic scope" value="Eukaryota"/>
</dbReference>
<dbReference type="HOGENOM" id="CLU_059030_1_0_1"/>
<dbReference type="InParanoid" id="P32792"/>
<dbReference type="OMA" id="IFDAGYW"/>
<dbReference type="OrthoDB" id="5308060at2759"/>
<dbReference type="BioCyc" id="YEAST:G3O-31079-MONOMER"/>
<dbReference type="BioGRID-ORCS" id="856410">
    <property type="hits" value="0 hits in 10 CRISPR screens"/>
</dbReference>
<dbReference type="PRO" id="PR:P32792"/>
<dbReference type="Proteomes" id="UP000002311">
    <property type="component" value="Chromosome VIII"/>
</dbReference>
<dbReference type="RNAct" id="P32792">
    <property type="molecule type" value="protein"/>
</dbReference>
<dbReference type="GO" id="GO:0005741">
    <property type="term" value="C:mitochondrial outer membrane"/>
    <property type="evidence" value="ECO:0007005"/>
    <property type="project" value="SGD"/>
</dbReference>
<dbReference type="GO" id="GO:0005739">
    <property type="term" value="C:mitochondrion"/>
    <property type="evidence" value="ECO:0007005"/>
    <property type="project" value="SGD"/>
</dbReference>
<dbReference type="InterPro" id="IPR013952">
    <property type="entry name" value="DUF1776_fun"/>
</dbReference>
<dbReference type="Pfam" id="PF08643">
    <property type="entry name" value="DUF1776"/>
    <property type="match status" value="1"/>
</dbReference>
<feature type="chain" id="PRO_0000202888" description="UPF0744 protein YSC83">
    <location>
        <begin position="1"/>
        <end position="385"/>
    </location>
</feature>
<keyword id="KW-0472">Membrane</keyword>
<keyword id="KW-0496">Mitochondrion</keyword>
<keyword id="KW-1000">Mitochondrion outer membrane</keyword>
<keyword id="KW-1185">Reference proteome</keyword>
<protein>
    <recommendedName>
        <fullName>UPF0744 protein YSC83</fullName>
    </recommendedName>
</protein>
<accession>P32792</accession>
<accession>D3DKW2</accession>
<organism>
    <name type="scientific">Saccharomyces cerevisiae (strain ATCC 204508 / S288c)</name>
    <name type="common">Baker's yeast</name>
    <dbReference type="NCBI Taxonomy" id="559292"/>
    <lineage>
        <taxon>Eukaryota</taxon>
        <taxon>Fungi</taxon>
        <taxon>Dikarya</taxon>
        <taxon>Ascomycota</taxon>
        <taxon>Saccharomycotina</taxon>
        <taxon>Saccharomycetes</taxon>
        <taxon>Saccharomycetales</taxon>
        <taxon>Saccharomycetaceae</taxon>
        <taxon>Saccharomyces</taxon>
    </lineage>
</organism>
<name>YHH7_YEAST</name>
<proteinExistence type="evidence at protein level"/>
<sequence>MAWSGGKDIVDQIFDAGYWLVSKSAVLSDEIKNHVEKSIESISGKISNKETPRLQENDSNRSKVYKTLRIGLQDHWKLGLGISATSLCLYLGYRTFFKLPPNLPEAESQVVLILGDMNDPIIRNQVMDLYRRRFTVYICTENADVYKKHEEDQDFIYYIDPTCEKDFEGFFVDVPRLASILFMPRLSYHPSGVISCDSLESEIHSSIFVYYQALLSIIPHLKRKTQLIMFNPSLTADLNLVHHSTEIITSGIIDSLFKIFKEYQRLNVSTIKLGILQIGSQPSNYKFLRMAGSDIHEALHYPVYKMIMSANGYKLRQLLSWLTTLGGYNSVYYCGRFSYLVSWPFASLIFNHHTRLSLKRLRGRLAKVYSSIISFFCRSSSKSSK</sequence>
<comment type="subcellular location">
    <subcellularLocation>
        <location evidence="1 2">Mitochondrion outer membrane</location>
        <topology evidence="1 2">Peripheral membrane protein</topology>
    </subcellularLocation>
</comment>
<comment type="similarity">
    <text evidence="3">Belongs to the UPF0744 family.</text>
</comment>
<evidence type="ECO:0000269" key="1">
    <source>
    </source>
</evidence>
<evidence type="ECO:0000269" key="2">
    <source>
    </source>
</evidence>
<evidence type="ECO:0000305" key="3"/>
<reference key="1">
    <citation type="journal article" date="1993" name="Yeast">
        <title>Identification of two divergently transcribed genes centromere-proximal to the ARG4 locus on chromosome VIII of Saccharomyces cerevisiae.</title>
        <authorList>
            <person name="Rocco V."/>
            <person name="Daly M.J."/>
            <person name="Matre V."/>
            <person name="Lichten M."/>
            <person name="Nicolas A."/>
        </authorList>
    </citation>
    <scope>NUCLEOTIDE SEQUENCE [GENOMIC DNA]</scope>
</reference>
<reference key="2">
    <citation type="journal article" date="1994" name="Science">
        <title>Complete nucleotide sequence of Saccharomyces cerevisiae chromosome VIII.</title>
        <authorList>
            <person name="Johnston M."/>
            <person name="Andrews S."/>
            <person name="Brinkman R."/>
            <person name="Cooper J."/>
            <person name="Ding H."/>
            <person name="Dover J."/>
            <person name="Du Z."/>
            <person name="Favello A."/>
            <person name="Fulton L."/>
            <person name="Gattung S."/>
            <person name="Geisel C."/>
            <person name="Kirsten J."/>
            <person name="Kucaba T."/>
            <person name="Hillier L.W."/>
            <person name="Jier M."/>
            <person name="Johnston L."/>
            <person name="Langston Y."/>
            <person name="Latreille P."/>
            <person name="Louis E.J."/>
            <person name="Macri C."/>
            <person name="Mardis E."/>
            <person name="Menezes S."/>
            <person name="Mouser L."/>
            <person name="Nhan M."/>
            <person name="Rifkin L."/>
            <person name="Riles L."/>
            <person name="St Peter H."/>
            <person name="Trevaskis E."/>
            <person name="Vaughan K."/>
            <person name="Vignati D."/>
            <person name="Wilcox L."/>
            <person name="Wohldman P."/>
            <person name="Waterston R."/>
            <person name="Wilson R."/>
            <person name="Vaudin M."/>
        </authorList>
    </citation>
    <scope>NUCLEOTIDE SEQUENCE [LARGE SCALE GENOMIC DNA]</scope>
    <source>
        <strain>ATCC 204508 / S288c</strain>
    </source>
</reference>
<reference key="3">
    <citation type="journal article" date="2014" name="G3 (Bethesda)">
        <title>The reference genome sequence of Saccharomyces cerevisiae: Then and now.</title>
        <authorList>
            <person name="Engel S.R."/>
            <person name="Dietrich F.S."/>
            <person name="Fisk D.G."/>
            <person name="Binkley G."/>
            <person name="Balakrishnan R."/>
            <person name="Costanzo M.C."/>
            <person name="Dwight S.S."/>
            <person name="Hitz B.C."/>
            <person name="Karra K."/>
            <person name="Nash R.S."/>
            <person name="Weng S."/>
            <person name="Wong E.D."/>
            <person name="Lloyd P."/>
            <person name="Skrzypek M.S."/>
            <person name="Miyasato S.R."/>
            <person name="Simison M."/>
            <person name="Cherry J.M."/>
        </authorList>
    </citation>
    <scope>GENOME REANNOTATION</scope>
    <source>
        <strain>ATCC 204508 / S288c</strain>
    </source>
</reference>
<reference key="4">
    <citation type="journal article" date="2007" name="Genome Res.">
        <title>Approaching a complete repository of sequence-verified protein-encoding clones for Saccharomyces cerevisiae.</title>
        <authorList>
            <person name="Hu Y."/>
            <person name="Rolfs A."/>
            <person name="Bhullar B."/>
            <person name="Murthy T.V.S."/>
            <person name="Zhu C."/>
            <person name="Berger M.F."/>
            <person name="Camargo A.A."/>
            <person name="Kelley F."/>
            <person name="McCarron S."/>
            <person name="Jepson D."/>
            <person name="Richardson A."/>
            <person name="Raphael J."/>
            <person name="Moreira D."/>
            <person name="Taycher E."/>
            <person name="Zuo D."/>
            <person name="Mohr S."/>
            <person name="Kane M.F."/>
            <person name="Williamson J."/>
            <person name="Simpson A.J.G."/>
            <person name="Bulyk M.L."/>
            <person name="Harlow E."/>
            <person name="Marsischky G."/>
            <person name="Kolodner R.D."/>
            <person name="LaBaer J."/>
        </authorList>
    </citation>
    <scope>NUCLEOTIDE SEQUENCE [GENOMIC DNA]</scope>
    <source>
        <strain>ATCC 204508 / S288c</strain>
    </source>
</reference>
<reference key="5">
    <citation type="journal article" date="2003" name="Proc. Natl. Acad. Sci. U.S.A.">
        <title>The proteome of Saccharomyces cerevisiae mitochondria.</title>
        <authorList>
            <person name="Sickmann A."/>
            <person name="Reinders J."/>
            <person name="Wagner Y."/>
            <person name="Joppich C."/>
            <person name="Zahedi R.P."/>
            <person name="Meyer H.E."/>
            <person name="Schoenfisch B."/>
            <person name="Perschil I."/>
            <person name="Chacinska A."/>
            <person name="Guiard B."/>
            <person name="Rehling P."/>
            <person name="Pfanner N."/>
            <person name="Meisinger C."/>
        </authorList>
    </citation>
    <scope>SUBCELLULAR LOCATION [LARGE SCALE ANALYSIS]</scope>
    <source>
        <strain>ATCC 76625 / YPH499</strain>
    </source>
</reference>
<reference key="6">
    <citation type="journal article" date="2006" name="Mol. Biol. Cell">
        <title>Proteomic analysis of the yeast mitochondrial outer membrane reveals accumulation of a subclass of preproteins.</title>
        <authorList>
            <person name="Zahedi R.P."/>
            <person name="Sickmann A."/>
            <person name="Boehm A.M."/>
            <person name="Winkler C."/>
            <person name="Zufall N."/>
            <person name="Schoenfisch B."/>
            <person name="Guiard B."/>
            <person name="Pfanner N."/>
            <person name="Meisinger C."/>
        </authorList>
    </citation>
    <scope>SUBCELLULAR LOCATION</scope>
    <scope>IDENTIFICATION BY MASS SPECTROMETRY</scope>
</reference>
<gene>
    <name type="primary">YSC83</name>
    <name type="ordered locus">YHR017W</name>
</gene>